<feature type="chain" id="PRO_1000059213" description="Potassium-transporting ATPase potassium-binding subunit">
    <location>
        <begin position="1"/>
        <end position="562"/>
    </location>
</feature>
<feature type="transmembrane region" description="Helical" evidence="1">
    <location>
        <begin position="6"/>
        <end position="26"/>
    </location>
</feature>
<feature type="transmembrane region" description="Helical" evidence="1">
    <location>
        <begin position="63"/>
        <end position="83"/>
    </location>
</feature>
<feature type="transmembrane region" description="Helical" evidence="1">
    <location>
        <begin position="132"/>
        <end position="152"/>
    </location>
</feature>
<feature type="transmembrane region" description="Helical" evidence="1">
    <location>
        <begin position="175"/>
        <end position="195"/>
    </location>
</feature>
<feature type="transmembrane region" description="Helical" evidence="1">
    <location>
        <begin position="253"/>
        <end position="273"/>
    </location>
</feature>
<feature type="transmembrane region" description="Helical" evidence="1">
    <location>
        <begin position="283"/>
        <end position="303"/>
    </location>
</feature>
<feature type="transmembrane region" description="Helical" evidence="1">
    <location>
        <begin position="327"/>
        <end position="347"/>
    </location>
</feature>
<feature type="transmembrane region" description="Helical" evidence="1">
    <location>
        <begin position="356"/>
        <end position="376"/>
    </location>
</feature>
<feature type="transmembrane region" description="Helical" evidence="1">
    <location>
        <begin position="379"/>
        <end position="399"/>
    </location>
</feature>
<feature type="transmembrane region" description="Helical" evidence="1">
    <location>
        <begin position="416"/>
        <end position="436"/>
    </location>
</feature>
<feature type="transmembrane region" description="Helical" evidence="1">
    <location>
        <begin position="483"/>
        <end position="503"/>
    </location>
</feature>
<feature type="transmembrane region" description="Helical" evidence="1">
    <location>
        <begin position="526"/>
        <end position="546"/>
    </location>
</feature>
<proteinExistence type="inferred from homology"/>
<name>KDPA_YERP3</name>
<keyword id="KW-0997">Cell inner membrane</keyword>
<keyword id="KW-1003">Cell membrane</keyword>
<keyword id="KW-0406">Ion transport</keyword>
<keyword id="KW-0472">Membrane</keyword>
<keyword id="KW-0630">Potassium</keyword>
<keyword id="KW-0633">Potassium transport</keyword>
<keyword id="KW-0812">Transmembrane</keyword>
<keyword id="KW-1133">Transmembrane helix</keyword>
<keyword id="KW-0813">Transport</keyword>
<dbReference type="EMBL" id="CP000720">
    <property type="protein sequence ID" value="ABS48735.1"/>
    <property type="molecule type" value="Genomic_DNA"/>
</dbReference>
<dbReference type="RefSeq" id="WP_012104772.1">
    <property type="nucleotide sequence ID" value="NC_009708.1"/>
</dbReference>
<dbReference type="SMR" id="A7FFR1"/>
<dbReference type="KEGG" id="ypi:YpsIP31758_1108"/>
<dbReference type="HOGENOM" id="CLU_018614_3_0_6"/>
<dbReference type="Proteomes" id="UP000002412">
    <property type="component" value="Chromosome"/>
</dbReference>
<dbReference type="GO" id="GO:0005886">
    <property type="term" value="C:plasma membrane"/>
    <property type="evidence" value="ECO:0007669"/>
    <property type="project" value="UniProtKB-SubCell"/>
</dbReference>
<dbReference type="GO" id="GO:0008556">
    <property type="term" value="F:P-type potassium transmembrane transporter activity"/>
    <property type="evidence" value="ECO:0007669"/>
    <property type="project" value="InterPro"/>
</dbReference>
<dbReference type="GO" id="GO:0030955">
    <property type="term" value="F:potassium ion binding"/>
    <property type="evidence" value="ECO:0007669"/>
    <property type="project" value="UniProtKB-UniRule"/>
</dbReference>
<dbReference type="HAMAP" id="MF_00275">
    <property type="entry name" value="KdpA"/>
    <property type="match status" value="1"/>
</dbReference>
<dbReference type="InterPro" id="IPR004623">
    <property type="entry name" value="KdpA"/>
</dbReference>
<dbReference type="NCBIfam" id="TIGR00680">
    <property type="entry name" value="kdpA"/>
    <property type="match status" value="1"/>
</dbReference>
<dbReference type="PANTHER" id="PTHR30607">
    <property type="entry name" value="POTASSIUM-TRANSPORTING ATPASE A CHAIN"/>
    <property type="match status" value="1"/>
</dbReference>
<dbReference type="PANTHER" id="PTHR30607:SF2">
    <property type="entry name" value="POTASSIUM-TRANSPORTING ATPASE POTASSIUM-BINDING SUBUNIT"/>
    <property type="match status" value="1"/>
</dbReference>
<dbReference type="Pfam" id="PF03814">
    <property type="entry name" value="KdpA"/>
    <property type="match status" value="1"/>
</dbReference>
<dbReference type="PIRSF" id="PIRSF001294">
    <property type="entry name" value="K_ATPaseA"/>
    <property type="match status" value="1"/>
</dbReference>
<gene>
    <name evidence="1" type="primary">kdpA</name>
    <name type="ordered locus">YpsIP31758_1108</name>
</gene>
<sequence>MAASGFLLIASFMVVLFVLSRPLGGFLARLIEGEPFSALQKVEAGLWRCSGVKNAEMNGWQYALAILCFNLLGIVLLFVLLMAQGSLPLNPEHLPGMSWHLALNTAVSFVTNTNWQAYSGENTLSYLSQMAGLTVQNFLSAATGIAVAFALIRAFARHSATTLGNAWVDLVRITLYVLLPIALIIALIFVSQGVLQNLDGYLHITTLEGVQQTLPMGPVASQEAIKVLGTNGGGFFGANSAHPFENPTAFSNFVQMLAIFLIPCALCFAFGQVVGDNRQGHALIWAMSLIFIVAVVVVMYAELAGNPHLSPLGADSNSNMEGKESRFGILATSLYAVVTTAASCGAVNAMHDSFTALGGMIPLWLMQIGEVVFGGVGSGLYGMLLFVLLTVFIAGLMIGRTPEYLGKKIDVFDMKMTALAILVTPTIVLLGTALALCTEAGRAGILNPGAHGFSEVLYALSSAANNNGSAFAGLSVNTPFYNLLLAAAMFIGRFGVILPVLAIASSLVAKKRQPAGNGTLPTGGPLFIGLLIGTVLLVGALTFIPALALGPVAEHLQVWLAH</sequence>
<protein>
    <recommendedName>
        <fullName evidence="1">Potassium-transporting ATPase potassium-binding subunit</fullName>
    </recommendedName>
    <alternativeName>
        <fullName evidence="1">ATP phosphohydrolase [potassium-transporting] A chain</fullName>
    </alternativeName>
    <alternativeName>
        <fullName evidence="1">Potassium-binding and translocating subunit A</fullName>
    </alternativeName>
    <alternativeName>
        <fullName evidence="1">Potassium-translocating ATPase A chain</fullName>
    </alternativeName>
</protein>
<reference key="1">
    <citation type="journal article" date="2007" name="PLoS Genet.">
        <title>The complete genome sequence of Yersinia pseudotuberculosis IP31758, the causative agent of Far East scarlet-like fever.</title>
        <authorList>
            <person name="Eppinger M."/>
            <person name="Rosovitz M.J."/>
            <person name="Fricke W.F."/>
            <person name="Rasko D.A."/>
            <person name="Kokorina G."/>
            <person name="Fayolle C."/>
            <person name="Lindler L.E."/>
            <person name="Carniel E."/>
            <person name="Ravel J."/>
        </authorList>
    </citation>
    <scope>NUCLEOTIDE SEQUENCE [LARGE SCALE GENOMIC DNA]</scope>
    <source>
        <strain>IP 31758</strain>
    </source>
</reference>
<accession>A7FFR1</accession>
<comment type="function">
    <text evidence="1">Part of the high-affinity ATP-driven potassium transport (or Kdp) system, which catalyzes the hydrolysis of ATP coupled with the electrogenic transport of potassium into the cytoplasm. This subunit binds the periplasmic potassium ions and delivers the ions to the membrane domain of KdpB through an intramembrane tunnel.</text>
</comment>
<comment type="subunit">
    <text evidence="1">The system is composed of three essential subunits: KdpA, KdpB and KdpC.</text>
</comment>
<comment type="subcellular location">
    <subcellularLocation>
        <location evidence="1">Cell inner membrane</location>
        <topology evidence="1">Multi-pass membrane protein</topology>
    </subcellularLocation>
</comment>
<comment type="similarity">
    <text evidence="1">Belongs to the KdpA family.</text>
</comment>
<organism>
    <name type="scientific">Yersinia pseudotuberculosis serotype O:1b (strain IP 31758)</name>
    <dbReference type="NCBI Taxonomy" id="349747"/>
    <lineage>
        <taxon>Bacteria</taxon>
        <taxon>Pseudomonadati</taxon>
        <taxon>Pseudomonadota</taxon>
        <taxon>Gammaproteobacteria</taxon>
        <taxon>Enterobacterales</taxon>
        <taxon>Yersiniaceae</taxon>
        <taxon>Yersinia</taxon>
    </lineage>
</organism>
<evidence type="ECO:0000255" key="1">
    <source>
        <dbReference type="HAMAP-Rule" id="MF_00275"/>
    </source>
</evidence>